<reference key="1">
    <citation type="journal article" date="2005" name="Mol. Genet. Genomics">
        <title>A fine physical map of the rice chromosome 5.</title>
        <authorList>
            <person name="Cheng C.-H."/>
            <person name="Chung M.C."/>
            <person name="Liu S.-M."/>
            <person name="Chen S.-K."/>
            <person name="Kao F.Y."/>
            <person name="Lin S.-J."/>
            <person name="Hsiao S.-H."/>
            <person name="Tseng I.C."/>
            <person name="Hsing Y.-I.C."/>
            <person name="Wu H.-P."/>
            <person name="Chen C.-S."/>
            <person name="Shaw J.-F."/>
            <person name="Wu J."/>
            <person name="Matsumoto T."/>
            <person name="Sasaki T."/>
            <person name="Chen H.-C."/>
            <person name="Chow T.-Y."/>
        </authorList>
    </citation>
    <scope>NUCLEOTIDE SEQUENCE [LARGE SCALE GENOMIC DNA]</scope>
    <source>
        <strain>cv. Nipponbare</strain>
    </source>
</reference>
<reference key="2">
    <citation type="journal article" date="2005" name="Nature">
        <title>The map-based sequence of the rice genome.</title>
        <authorList>
            <consortium name="International rice genome sequencing project (IRGSP)"/>
        </authorList>
    </citation>
    <scope>NUCLEOTIDE SEQUENCE [LARGE SCALE GENOMIC DNA]</scope>
    <source>
        <strain>cv. Nipponbare</strain>
    </source>
</reference>
<reference key="3">
    <citation type="journal article" date="2008" name="Nucleic Acids Res.">
        <title>The rice annotation project database (RAP-DB): 2008 update.</title>
        <authorList>
            <consortium name="The rice annotation project (RAP)"/>
        </authorList>
    </citation>
    <scope>GENOME REANNOTATION</scope>
    <source>
        <strain>cv. Nipponbare</strain>
    </source>
</reference>
<reference key="4">
    <citation type="journal article" date="2013" name="Rice">
        <title>Improvement of the Oryza sativa Nipponbare reference genome using next generation sequence and optical map data.</title>
        <authorList>
            <person name="Kawahara Y."/>
            <person name="de la Bastide M."/>
            <person name="Hamilton J.P."/>
            <person name="Kanamori H."/>
            <person name="McCombie W.R."/>
            <person name="Ouyang S."/>
            <person name="Schwartz D.C."/>
            <person name="Tanaka T."/>
            <person name="Wu J."/>
            <person name="Zhou S."/>
            <person name="Childs K.L."/>
            <person name="Davidson R.M."/>
            <person name="Lin H."/>
            <person name="Quesada-Ocampo L."/>
            <person name="Vaillancourt B."/>
            <person name="Sakai H."/>
            <person name="Lee S.S."/>
            <person name="Kim J."/>
            <person name="Numa H."/>
            <person name="Itoh T."/>
            <person name="Buell C.R."/>
            <person name="Matsumoto T."/>
        </authorList>
    </citation>
    <scope>GENOME REANNOTATION</scope>
    <source>
        <strain>cv. Nipponbare</strain>
    </source>
</reference>
<reference key="5">
    <citation type="journal article" date="2006" name="Genome">
        <title>Distribution, structure, organ-specific expression, and phylogenic analysis of the pathogenesis-related protein-3 chitinase gene family in rice (Oryza sativa L.).</title>
        <authorList>
            <person name="Nakazaki T."/>
            <person name="Tsukiyama T."/>
            <person name="Okumoto Y."/>
            <person name="Kageyama D."/>
            <person name="Naito K."/>
            <person name="Inouye K."/>
            <person name="Tanisaka T."/>
        </authorList>
    </citation>
    <scope>GENE FAMILY</scope>
    <scope>NOMENCLATURE</scope>
    <scope>TISSUE SPECIFICITY</scope>
</reference>
<name>CHI9_ORYSJ</name>
<accession>Q688M5</accession>
<accession>A0A0P0WM33</accession>
<sequence length="334" mass="34401">MKATTTAVALLVAAAAMAAQVVAEQCGSQAGGALCPNCLCCSSYGWCGSTSDYCGDGCQSQCDGCGGGGGGGGGGGGGGGGGGGAVEAVVSKELFEQLLLHRNDAACPARGFYTYDALVTAAAAFPDFAATGDDEARKREVAAFLGQTSHETTGGWATAPDGPYSWGYCFKEEIGATASYCVPSAEWPCAPDKKYFGRGPIQLSYNYNYGPAGEAIGEDLLNNPELVASDPVVSFKTALWFWMTPQSPKPSCHDVITGQWTPSSGDIAAGRVPGYGVITNIINGGLECGFGPDDRVANRIGFYQRYCDVLGIGYGSNLDCYDQRPFNSGLTAAQ</sequence>
<evidence type="ECO:0000250" key="1">
    <source>
        <dbReference type="UniProtKB" id="P29022"/>
    </source>
</evidence>
<evidence type="ECO:0000255" key="2"/>
<evidence type="ECO:0000255" key="3">
    <source>
        <dbReference type="PROSITE-ProRule" id="PRU00261"/>
    </source>
</evidence>
<evidence type="ECO:0000269" key="4">
    <source>
    </source>
</evidence>
<evidence type="ECO:0000305" key="5"/>
<organism>
    <name type="scientific">Oryza sativa subsp. japonica</name>
    <name type="common">Rice</name>
    <dbReference type="NCBI Taxonomy" id="39947"/>
    <lineage>
        <taxon>Eukaryota</taxon>
        <taxon>Viridiplantae</taxon>
        <taxon>Streptophyta</taxon>
        <taxon>Embryophyta</taxon>
        <taxon>Tracheophyta</taxon>
        <taxon>Spermatophyta</taxon>
        <taxon>Magnoliopsida</taxon>
        <taxon>Liliopsida</taxon>
        <taxon>Poales</taxon>
        <taxon>Poaceae</taxon>
        <taxon>BOP clade</taxon>
        <taxon>Oryzoideae</taxon>
        <taxon>Oryzeae</taxon>
        <taxon>Oryzinae</taxon>
        <taxon>Oryza</taxon>
        <taxon>Oryza sativa</taxon>
    </lineage>
</organism>
<gene>
    <name type="primary">Cht9</name>
    <name type="synonym">Cht1</name>
    <name type="ordered locus">Os05g0399400</name>
    <name type="ordered locus">LOC_Os05g33140</name>
    <name type="ORF">P0605G01.14</name>
</gene>
<comment type="function">
    <text>May play a role in defense against fungal pathogens containing chitin.</text>
</comment>
<comment type="catalytic activity">
    <reaction>
        <text>Random endo-hydrolysis of N-acetyl-beta-D-glucosaminide (1-&gt;4)-beta-linkages in chitin and chitodextrins.</text>
        <dbReference type="EC" id="3.2.1.14"/>
    </reaction>
</comment>
<comment type="tissue specificity">
    <text evidence="4">Expressed at high levels in roots, sheaths and meristems.</text>
</comment>
<comment type="similarity">
    <text evidence="5">Belongs to the glycosyl hydrolase 19 family. Chitinase class I subfamily.</text>
</comment>
<protein>
    <recommendedName>
        <fullName>Chitinase 9</fullName>
        <ecNumber>3.2.1.14</ecNumber>
    </recommendedName>
    <alternativeName>
        <fullName>Pathogenesis related (PR)-3 chitinase 9</fullName>
    </alternativeName>
</protein>
<keyword id="KW-0119">Carbohydrate metabolism</keyword>
<keyword id="KW-0146">Chitin degradation</keyword>
<keyword id="KW-0147">Chitin-binding</keyword>
<keyword id="KW-1015">Disulfide bond</keyword>
<keyword id="KW-0326">Glycosidase</keyword>
<keyword id="KW-0378">Hydrolase</keyword>
<keyword id="KW-0611">Plant defense</keyword>
<keyword id="KW-0624">Polysaccharide degradation</keyword>
<keyword id="KW-1185">Reference proteome</keyword>
<keyword id="KW-0732">Signal</keyword>
<dbReference type="EC" id="3.2.1.14"/>
<dbReference type="EMBL" id="AC132492">
    <property type="protein sequence ID" value="AAU10806.1"/>
    <property type="molecule type" value="Genomic_DNA"/>
</dbReference>
<dbReference type="EMBL" id="AP008211">
    <property type="protein sequence ID" value="BAF17391.1"/>
    <property type="molecule type" value="Genomic_DNA"/>
</dbReference>
<dbReference type="EMBL" id="AP014961">
    <property type="protein sequence ID" value="BAS93904.1"/>
    <property type="molecule type" value="Genomic_DNA"/>
</dbReference>
<dbReference type="RefSeq" id="XP_015640433.1">
    <property type="nucleotide sequence ID" value="XM_015784947.1"/>
</dbReference>
<dbReference type="SMR" id="Q688M5"/>
<dbReference type="FunCoup" id="Q688M5">
    <property type="interactions" value="258"/>
</dbReference>
<dbReference type="STRING" id="39947.Q688M5"/>
<dbReference type="CAZy" id="CBM18">
    <property type="family name" value="Carbohydrate-Binding Module Family 18"/>
</dbReference>
<dbReference type="CAZy" id="GH19">
    <property type="family name" value="Glycoside Hydrolase Family 19"/>
</dbReference>
<dbReference type="PaxDb" id="39947-Q688M5"/>
<dbReference type="EnsemblPlants" id="Os05t0399400-00">
    <property type="protein sequence ID" value="Os05t0399400-00"/>
    <property type="gene ID" value="Os05g0399400"/>
</dbReference>
<dbReference type="Gramene" id="Os05t0399400-00">
    <property type="protein sequence ID" value="Os05t0399400-00"/>
    <property type="gene ID" value="Os05g0399400"/>
</dbReference>
<dbReference type="KEGG" id="dosa:Os05g0399400"/>
<dbReference type="eggNOG" id="KOG4742">
    <property type="taxonomic scope" value="Eukaryota"/>
</dbReference>
<dbReference type="HOGENOM" id="CLU_045506_1_0_1"/>
<dbReference type="InParanoid" id="Q688M5"/>
<dbReference type="OMA" id="VITERWN"/>
<dbReference type="OrthoDB" id="5985073at2759"/>
<dbReference type="Proteomes" id="UP000000763">
    <property type="component" value="Chromosome 5"/>
</dbReference>
<dbReference type="Proteomes" id="UP000059680">
    <property type="component" value="Chromosome 5"/>
</dbReference>
<dbReference type="GO" id="GO:0008061">
    <property type="term" value="F:chitin binding"/>
    <property type="evidence" value="ECO:0007669"/>
    <property type="project" value="UniProtKB-KW"/>
</dbReference>
<dbReference type="GO" id="GO:0004568">
    <property type="term" value="F:chitinase activity"/>
    <property type="evidence" value="ECO:0000318"/>
    <property type="project" value="GO_Central"/>
</dbReference>
<dbReference type="GO" id="GO:0008843">
    <property type="term" value="F:endochitinase activity"/>
    <property type="evidence" value="ECO:0007669"/>
    <property type="project" value="UniProtKB-EC"/>
</dbReference>
<dbReference type="GO" id="GO:0016998">
    <property type="term" value="P:cell wall macromolecule catabolic process"/>
    <property type="evidence" value="ECO:0007669"/>
    <property type="project" value="InterPro"/>
</dbReference>
<dbReference type="GO" id="GO:0006032">
    <property type="term" value="P:chitin catabolic process"/>
    <property type="evidence" value="ECO:0007669"/>
    <property type="project" value="UniProtKB-KW"/>
</dbReference>
<dbReference type="GO" id="GO:0050832">
    <property type="term" value="P:defense response to fungus"/>
    <property type="evidence" value="ECO:0000318"/>
    <property type="project" value="GO_Central"/>
</dbReference>
<dbReference type="GO" id="GO:0000272">
    <property type="term" value="P:polysaccharide catabolic process"/>
    <property type="evidence" value="ECO:0007669"/>
    <property type="project" value="UniProtKB-KW"/>
</dbReference>
<dbReference type="CDD" id="cd00325">
    <property type="entry name" value="chitinase_GH19"/>
    <property type="match status" value="1"/>
</dbReference>
<dbReference type="CDD" id="cd06921">
    <property type="entry name" value="ChtBD1_GH19_hevein"/>
    <property type="match status" value="1"/>
</dbReference>
<dbReference type="FunFam" id="3.30.60.10:FF:000001">
    <property type="entry name" value="Basic endochitinase"/>
    <property type="match status" value="1"/>
</dbReference>
<dbReference type="FunFam" id="3.30.20.10:FF:000001">
    <property type="entry name" value="Endochitinase (Chitinase)"/>
    <property type="match status" value="1"/>
</dbReference>
<dbReference type="Gene3D" id="1.10.530.10">
    <property type="match status" value="1"/>
</dbReference>
<dbReference type="Gene3D" id="3.30.20.10">
    <property type="entry name" value="Endochitinase, domain 2"/>
    <property type="match status" value="1"/>
</dbReference>
<dbReference type="Gene3D" id="3.30.60.10">
    <property type="entry name" value="Endochitinase-like"/>
    <property type="match status" value="1"/>
</dbReference>
<dbReference type="InterPro" id="IPR001002">
    <property type="entry name" value="Chitin-bd_1"/>
</dbReference>
<dbReference type="InterPro" id="IPR018371">
    <property type="entry name" value="Chitin-binding_1_CS"/>
</dbReference>
<dbReference type="InterPro" id="IPR036861">
    <property type="entry name" value="Endochitinase-like_sf"/>
</dbReference>
<dbReference type="InterPro" id="IPR016283">
    <property type="entry name" value="Glyco_hydro_19"/>
</dbReference>
<dbReference type="InterPro" id="IPR000726">
    <property type="entry name" value="Glyco_hydro_19_cat"/>
</dbReference>
<dbReference type="InterPro" id="IPR023346">
    <property type="entry name" value="Lysozyme-like_dom_sf"/>
</dbReference>
<dbReference type="PANTHER" id="PTHR22595:SF140">
    <property type="entry name" value="CHITINASE 2"/>
    <property type="match status" value="1"/>
</dbReference>
<dbReference type="PANTHER" id="PTHR22595">
    <property type="entry name" value="CHITINASE-RELATED"/>
    <property type="match status" value="1"/>
</dbReference>
<dbReference type="Pfam" id="PF00187">
    <property type="entry name" value="Chitin_bind_1"/>
    <property type="match status" value="1"/>
</dbReference>
<dbReference type="Pfam" id="PF00182">
    <property type="entry name" value="Glyco_hydro_19"/>
    <property type="match status" value="1"/>
</dbReference>
<dbReference type="PIRSF" id="PIRSF001060">
    <property type="entry name" value="Endochitinase"/>
    <property type="match status" value="1"/>
</dbReference>
<dbReference type="PRINTS" id="PR00451">
    <property type="entry name" value="CHITINBINDNG"/>
</dbReference>
<dbReference type="SMART" id="SM00270">
    <property type="entry name" value="ChtBD1"/>
    <property type="match status" value="1"/>
</dbReference>
<dbReference type="SUPFAM" id="SSF53955">
    <property type="entry name" value="Lysozyme-like"/>
    <property type="match status" value="1"/>
</dbReference>
<dbReference type="SUPFAM" id="SSF57016">
    <property type="entry name" value="Plant lectins/antimicrobial peptides"/>
    <property type="match status" value="1"/>
</dbReference>
<dbReference type="PROSITE" id="PS00026">
    <property type="entry name" value="CHIT_BIND_I_1"/>
    <property type="match status" value="1"/>
</dbReference>
<dbReference type="PROSITE" id="PS50941">
    <property type="entry name" value="CHIT_BIND_I_2"/>
    <property type="match status" value="1"/>
</dbReference>
<dbReference type="PROSITE" id="PS00774">
    <property type="entry name" value="CHITINASE_19_2"/>
    <property type="match status" value="1"/>
</dbReference>
<proteinExistence type="evidence at transcript level"/>
<feature type="signal peptide" evidence="2">
    <location>
        <begin position="1"/>
        <end position="23"/>
    </location>
</feature>
<feature type="chain" id="PRO_0000383469" description="Chitinase 9">
    <location>
        <begin position="24"/>
        <end position="334"/>
    </location>
</feature>
<feature type="domain" description="Chitin-binding type-1" evidence="3">
    <location>
        <begin position="24"/>
        <end position="64"/>
    </location>
</feature>
<feature type="active site" description="Proton donor" evidence="1">
    <location>
        <position position="151"/>
    </location>
</feature>
<feature type="disulfide bond" evidence="3">
    <location>
        <begin position="26"/>
        <end position="41"/>
    </location>
</feature>
<feature type="disulfide bond" evidence="3">
    <location>
        <begin position="35"/>
        <end position="47"/>
    </location>
</feature>
<feature type="disulfide bond" evidence="3">
    <location>
        <begin position="38"/>
        <end position="65"/>
    </location>
</feature>
<feature type="disulfide bond" evidence="3">
    <location>
        <begin position="40"/>
        <end position="54"/>
    </location>
</feature>
<feature type="disulfide bond" evidence="3">
    <location>
        <begin position="58"/>
        <end position="62"/>
    </location>
</feature>
<feature type="disulfide bond" evidence="3">
    <location>
        <begin position="107"/>
        <end position="169"/>
    </location>
</feature>
<feature type="disulfide bond" evidence="3">
    <location>
        <begin position="181"/>
        <end position="189"/>
    </location>
</feature>
<feature type="disulfide bond" evidence="3">
    <location>
        <begin position="288"/>
        <end position="320"/>
    </location>
</feature>